<protein>
    <recommendedName>
        <fullName evidence="7">Sterol 3-beta-glucosyltransferase</fullName>
        <ecNumber evidence="1">2.4.1.-</ecNumber>
        <ecNumber evidence="1">2.4.1.173</ecNumber>
    </recommendedName>
    <alternativeName>
        <fullName evidence="1">Autophagy-related protein 26</fullName>
    </alternativeName>
</protein>
<feature type="chain" id="PRO_0000318047" description="Sterol 3-beta-glucosyltransferase">
    <location>
        <begin position="1"/>
        <end position="1241"/>
    </location>
</feature>
<feature type="domain" description="GRAM 1" evidence="3">
    <location>
        <begin position="220"/>
        <end position="267"/>
    </location>
</feature>
<feature type="domain" description="PH" evidence="4">
    <location>
        <begin position="271"/>
        <end position="373"/>
    </location>
</feature>
<feature type="domain" description="GRAM 2" evidence="3">
    <location>
        <begin position="609"/>
        <end position="675"/>
    </location>
</feature>
<feature type="region of interest" description="Disordered" evidence="5">
    <location>
        <begin position="1"/>
        <end position="97"/>
    </location>
</feature>
<feature type="region of interest" description="Disordered" evidence="5">
    <location>
        <begin position="124"/>
        <end position="189"/>
    </location>
</feature>
<feature type="region of interest" description="Disordered" evidence="5">
    <location>
        <begin position="499"/>
        <end position="556"/>
    </location>
</feature>
<feature type="region of interest" description="Disordered" evidence="5">
    <location>
        <begin position="720"/>
        <end position="741"/>
    </location>
</feature>
<feature type="compositionally biased region" description="Acidic residues" evidence="5">
    <location>
        <begin position="1"/>
        <end position="11"/>
    </location>
</feature>
<feature type="compositionally biased region" description="Basic and acidic residues" evidence="5">
    <location>
        <begin position="25"/>
        <end position="34"/>
    </location>
</feature>
<feature type="compositionally biased region" description="Acidic residues" evidence="5">
    <location>
        <begin position="136"/>
        <end position="155"/>
    </location>
</feature>
<feature type="compositionally biased region" description="Acidic residues" evidence="5">
    <location>
        <begin position="516"/>
        <end position="527"/>
    </location>
</feature>
<feature type="compositionally biased region" description="Basic and acidic residues" evidence="5">
    <location>
        <begin position="540"/>
        <end position="549"/>
    </location>
</feature>
<feature type="compositionally biased region" description="Polar residues" evidence="5">
    <location>
        <begin position="723"/>
        <end position="741"/>
    </location>
</feature>
<feature type="binding site" evidence="1">
    <location>
        <position position="797"/>
    </location>
    <ligand>
        <name>UDP-alpha-D-glucose</name>
        <dbReference type="ChEBI" id="CHEBI:58885"/>
    </ligand>
</feature>
<feature type="binding site" evidence="1">
    <location>
        <position position="798"/>
    </location>
    <ligand>
        <name>UDP-alpha-D-glucose</name>
        <dbReference type="ChEBI" id="CHEBI:58885"/>
    </ligand>
</feature>
<feature type="binding site" evidence="1">
    <location>
        <position position="800"/>
    </location>
    <ligand>
        <name>UDP-alpha-D-glucose</name>
        <dbReference type="ChEBI" id="CHEBI:58885"/>
    </ligand>
</feature>
<feature type="binding site" evidence="1">
    <location>
        <position position="1071"/>
    </location>
    <ligand>
        <name>UDP-alpha-D-glucose</name>
        <dbReference type="ChEBI" id="CHEBI:58885"/>
    </ligand>
</feature>
<feature type="binding site" evidence="1">
    <location>
        <position position="1098"/>
    </location>
    <ligand>
        <name>UDP-alpha-D-glucose</name>
        <dbReference type="ChEBI" id="CHEBI:58885"/>
    </ligand>
</feature>
<feature type="binding site" evidence="1">
    <location>
        <position position="1100"/>
    </location>
    <ligand>
        <name>UDP-alpha-D-glucose</name>
        <dbReference type="ChEBI" id="CHEBI:58885"/>
    </ligand>
</feature>
<feature type="binding site" evidence="1">
    <location>
        <position position="1113"/>
    </location>
    <ligand>
        <name>UDP-alpha-D-glucose</name>
        <dbReference type="ChEBI" id="CHEBI:58885"/>
    </ligand>
</feature>
<feature type="binding site" evidence="1">
    <location>
        <position position="1116"/>
    </location>
    <ligand>
        <name>UDP-alpha-D-glucose</name>
        <dbReference type="ChEBI" id="CHEBI:58885"/>
    </ligand>
</feature>
<feature type="binding site" evidence="1">
    <location>
        <position position="1117"/>
    </location>
    <ligand>
        <name>UDP-alpha-D-glucose</name>
        <dbReference type="ChEBI" id="CHEBI:58885"/>
    </ligand>
</feature>
<feature type="binding site" evidence="1">
    <location>
        <position position="1118"/>
    </location>
    <ligand>
        <name>UDP-alpha-D-glucose</name>
        <dbReference type="ChEBI" id="CHEBI:58885"/>
    </ligand>
</feature>
<feature type="binding site" evidence="1">
    <location>
        <position position="1137"/>
    </location>
    <ligand>
        <name>UDP-alpha-D-glucose</name>
        <dbReference type="ChEBI" id="CHEBI:58885"/>
    </ligand>
</feature>
<feature type="binding site" evidence="1">
    <location>
        <position position="1138"/>
    </location>
    <ligand>
        <name>UDP-alpha-D-glucose</name>
        <dbReference type="ChEBI" id="CHEBI:58885"/>
    </ligand>
</feature>
<proteinExistence type="inferred from homology"/>
<sequence>MSGIESTEEPCDSMTESQSLSPLEPEERQTRKDSGLQSQSLTKRHFAFSPHRLITSISRHTSPHKPRPKSESRVPVPKLHSLPPQRLASPERDKPSIEGISKSFVSFLTAASVYAGFQDLEGEDQQVSPDDVSAGESEDQQADESSDEQEDDDQDDRTFYATDPSPTELTINENTPLPEPEPPRRTLRKARSRFEFSVVKRLSENENDQLAQKRAIALSNKLKRTFDISDTDVFISDYPCWLMGDVLLQGHLYITKHHILFFAFLPKKQGSISKSGALTTKSYPSLREHRKWAVLRNNTFSVYSNSTDLYFPLLVIDLRTALRAEILQSSSTKQNPSKPVWIRIITESRTHWFLADNLASARSWVSSLKKHIFASRNKGDQVAIKIPLQNVVDLELTSVIGVTKNLRIKVIESADTFAIDDYFLMFFSRGEKAVEDIKKVIHDAGMEISEGTSTESEDEQGVDNNLLKSKIELLKKSPSMVQTSSKSNVPVIRMDEPADDFSQEQESAESSKPVSDDEIVSADDNQELEEKQPQDNLANAEKENHDKVSRANSRRTWSTRSLVQGLTAITQGWMSPSPMAHFDEKYAVLRGEEDSYFVKDAEQRKAATERFRKHFSLTDGEKLIATYHAYLVKGIPAYGKIYLGSNEMCFRSTLPGTGTIMILPFSDIENVNKEKGFRFGYSGLVVVIHGHEELFFEFASDQARDDCEFMLLKQMDMFKKGSTDSSPPNASEGSSDESCNLAESNTSLASARLRMFENRIHDAIGLDVPIIIEEHPLTKTKVRPLKSYRFTLLTIGSRGDVQPYIALGKALMKEGHQVRIVTHAEFEPWIKKHGIRFASIAGDPSELMALMVTHPTINYNFIKEAKSKFRSWIDDLLVTSWKACQDTDILIESPSSICGIHIAEKLQIPYFRAFTMPWTRTRAYPHAFMVPDQKLGGAYNYMTHVAFENGYWRGTAHQVNKWRVETLGLPKTSLAEMKQNNVPFLYNVSPTVFPPSVDFAEWVKVTGYWFLDESETYQPPEVLTKFIEQARKDGKKVVYIGFGSIVVSKPSELTQAVVDAVLEADVRCILNKGWSDRLGTKTEIEVVLPPEIYNAGSVPHDWLFPQIDAAVHHGGSGTTGASLRFGVPTIIKPFFGDQKFYAGRVEDLGCGVSLKDLNYKSLARALKEVTTNTRIIEKAKLVGARIRSETGVQTAIETIYNEMEYARSLSISKVKQVSVVKSDEEFDDDKDEEVEGSWLLV</sequence>
<evidence type="ECO:0000250" key="1">
    <source>
        <dbReference type="UniProtKB" id="Q06321"/>
    </source>
</evidence>
<evidence type="ECO:0000250" key="2">
    <source>
        <dbReference type="UniProtKB" id="Q2U0C3"/>
    </source>
</evidence>
<evidence type="ECO:0000255" key="3"/>
<evidence type="ECO:0000255" key="4">
    <source>
        <dbReference type="PROSITE-ProRule" id="PRU00145"/>
    </source>
</evidence>
<evidence type="ECO:0000256" key="5">
    <source>
        <dbReference type="SAM" id="MobiDB-lite"/>
    </source>
</evidence>
<evidence type="ECO:0000269" key="6">
    <source>
    </source>
</evidence>
<evidence type="ECO:0000305" key="7"/>
<gene>
    <name evidence="1" type="primary">ATG26</name>
</gene>
<organism>
    <name type="scientific">Pichia angusta</name>
    <name type="common">Yeast</name>
    <name type="synonym">Hansenula polymorpha</name>
    <dbReference type="NCBI Taxonomy" id="870730"/>
    <lineage>
        <taxon>Eukaryota</taxon>
        <taxon>Fungi</taxon>
        <taxon>Dikarya</taxon>
        <taxon>Ascomycota</taxon>
        <taxon>Saccharomycotina</taxon>
        <taxon>Pichiomycetes</taxon>
        <taxon>Pichiales</taxon>
        <taxon>Pichiaceae</taxon>
        <taxon>Ogataea</taxon>
    </lineage>
</organism>
<reference key="1">
    <citation type="journal article" date="2007" name="Autophagy">
        <title>ATG genes involved in non-selective autophagy are conserved from yeast to man, but the selective Cvt and pexophagy pathways also require organism-specific genes.</title>
        <authorList>
            <person name="Meijer W.H."/>
            <person name="van der Klei I.J."/>
            <person name="Veenhuis M."/>
            <person name="Kiel J.A.K.W."/>
        </authorList>
    </citation>
    <scope>NUCLEOTIDE SEQUENCE [GENOMIC DNA]</scope>
    <scope>FUNCTION</scope>
    <source>
        <strain>ATCC 34438 / CBS 4732 / DSM 70277 / JCM 3621 / NBRC 1476 / NRRL Y-5445</strain>
    </source>
</reference>
<name>ATG26_PICAN</name>
<keyword id="KW-0072">Autophagy</keyword>
<keyword id="KW-0963">Cytoplasm</keyword>
<keyword id="KW-0328">Glycosyltransferase</keyword>
<keyword id="KW-0444">Lipid biosynthesis</keyword>
<keyword id="KW-0443">Lipid metabolism</keyword>
<keyword id="KW-0472">Membrane</keyword>
<keyword id="KW-0653">Protein transport</keyword>
<keyword id="KW-0677">Repeat</keyword>
<keyword id="KW-0752">Steroid biosynthesis</keyword>
<keyword id="KW-0753">Steroid metabolism</keyword>
<keyword id="KW-0756">Sterol biosynthesis</keyword>
<keyword id="KW-1207">Sterol metabolism</keyword>
<keyword id="KW-0808">Transferase</keyword>
<keyword id="KW-0813">Transport</keyword>
<dbReference type="EC" id="2.4.1.-" evidence="1"/>
<dbReference type="EC" id="2.4.1.173" evidence="1"/>
<dbReference type="EMBL" id="EF107728">
    <property type="protein sequence ID" value="ABO31066.1"/>
    <property type="molecule type" value="Genomic_DNA"/>
</dbReference>
<dbReference type="SMR" id="A7KAK6"/>
<dbReference type="CAZy" id="GT1">
    <property type="family name" value="Glycosyltransferase Family 1"/>
</dbReference>
<dbReference type="BRENDA" id="2.4.1.173">
    <property type="organism ID" value="2587"/>
</dbReference>
<dbReference type="GO" id="GO:0034045">
    <property type="term" value="C:phagophore assembly site membrane"/>
    <property type="evidence" value="ECO:0007669"/>
    <property type="project" value="UniProtKB-SubCell"/>
</dbReference>
<dbReference type="GO" id="GO:0016906">
    <property type="term" value="F:sterol 3-beta-glucosyltransferase activity"/>
    <property type="evidence" value="ECO:0007669"/>
    <property type="project" value="UniProtKB-EC"/>
</dbReference>
<dbReference type="GO" id="GO:0006914">
    <property type="term" value="P:autophagy"/>
    <property type="evidence" value="ECO:0007669"/>
    <property type="project" value="UniProtKB-KW"/>
</dbReference>
<dbReference type="GO" id="GO:0005975">
    <property type="term" value="P:carbohydrate metabolic process"/>
    <property type="evidence" value="ECO:0007669"/>
    <property type="project" value="InterPro"/>
</dbReference>
<dbReference type="GO" id="GO:0030259">
    <property type="term" value="P:lipid glycosylation"/>
    <property type="evidence" value="ECO:0007669"/>
    <property type="project" value="InterPro"/>
</dbReference>
<dbReference type="GO" id="GO:0015031">
    <property type="term" value="P:protein transport"/>
    <property type="evidence" value="ECO:0007669"/>
    <property type="project" value="UniProtKB-KW"/>
</dbReference>
<dbReference type="GO" id="GO:0016126">
    <property type="term" value="P:sterol biosynthetic process"/>
    <property type="evidence" value="ECO:0007669"/>
    <property type="project" value="UniProtKB-KW"/>
</dbReference>
<dbReference type="CDD" id="cd03784">
    <property type="entry name" value="GT1_Gtf-like"/>
    <property type="match status" value="1"/>
</dbReference>
<dbReference type="CDD" id="cd13215">
    <property type="entry name" value="PH-GRAM1_AGT26"/>
    <property type="match status" value="1"/>
</dbReference>
<dbReference type="CDD" id="cd13216">
    <property type="entry name" value="PH-GRAM2_AGT26"/>
    <property type="match status" value="1"/>
</dbReference>
<dbReference type="FunFam" id="2.30.29.30:FF:000303">
    <property type="entry name" value="Sterol 3-beta-glucosyltransferase"/>
    <property type="match status" value="1"/>
</dbReference>
<dbReference type="FunFam" id="2.30.29.30:FF:000391">
    <property type="entry name" value="Sterol 3-beta-glucosyltransferase"/>
    <property type="match status" value="1"/>
</dbReference>
<dbReference type="FunFam" id="3.40.50.2000:FF:000029">
    <property type="entry name" value="Sterol 3-beta-glucosyltransferase"/>
    <property type="match status" value="1"/>
</dbReference>
<dbReference type="FunFam" id="3.40.50.2000:FF:000009">
    <property type="entry name" value="Sterol 3-beta-glucosyltransferase UGT80A2"/>
    <property type="match status" value="1"/>
</dbReference>
<dbReference type="Gene3D" id="3.40.50.2000">
    <property type="entry name" value="Glycogen Phosphorylase B"/>
    <property type="match status" value="2"/>
</dbReference>
<dbReference type="Gene3D" id="2.30.29.30">
    <property type="entry name" value="Pleckstrin-homology domain (PH domain)/Phosphotyrosine-binding domain (PTB)"/>
    <property type="match status" value="3"/>
</dbReference>
<dbReference type="InterPro" id="IPR048066">
    <property type="entry name" value="ATG26_PH_GRAM1"/>
</dbReference>
<dbReference type="InterPro" id="IPR048065">
    <property type="entry name" value="ATG26_PH_GRAM2"/>
</dbReference>
<dbReference type="InterPro" id="IPR010610">
    <property type="entry name" value="EryCIII-like_C"/>
</dbReference>
<dbReference type="InterPro" id="IPR050426">
    <property type="entry name" value="Glycosyltransferase_28"/>
</dbReference>
<dbReference type="InterPro" id="IPR004276">
    <property type="entry name" value="GlycoTrans_28_N"/>
</dbReference>
<dbReference type="InterPro" id="IPR004182">
    <property type="entry name" value="GRAM"/>
</dbReference>
<dbReference type="InterPro" id="IPR011993">
    <property type="entry name" value="PH-like_dom_sf"/>
</dbReference>
<dbReference type="InterPro" id="IPR001849">
    <property type="entry name" value="PH_domain"/>
</dbReference>
<dbReference type="InterPro" id="IPR002213">
    <property type="entry name" value="UDP_glucos_trans"/>
</dbReference>
<dbReference type="PANTHER" id="PTHR48050">
    <property type="entry name" value="STEROL 3-BETA-GLUCOSYLTRANSFERASE"/>
    <property type="match status" value="1"/>
</dbReference>
<dbReference type="PANTHER" id="PTHR48050:SF25">
    <property type="entry name" value="STEROL 3-BETA-GLUCOSYLTRANSFERASE"/>
    <property type="match status" value="1"/>
</dbReference>
<dbReference type="Pfam" id="PF06722">
    <property type="entry name" value="EryCIII-like_C"/>
    <property type="match status" value="1"/>
</dbReference>
<dbReference type="Pfam" id="PF03033">
    <property type="entry name" value="Glyco_transf_28"/>
    <property type="match status" value="1"/>
</dbReference>
<dbReference type="Pfam" id="PF02893">
    <property type="entry name" value="GRAM"/>
    <property type="match status" value="1"/>
</dbReference>
<dbReference type="Pfam" id="PF00169">
    <property type="entry name" value="PH"/>
    <property type="match status" value="1"/>
</dbReference>
<dbReference type="SMART" id="SM00568">
    <property type="entry name" value="GRAM"/>
    <property type="match status" value="2"/>
</dbReference>
<dbReference type="SMART" id="SM00233">
    <property type="entry name" value="PH"/>
    <property type="match status" value="1"/>
</dbReference>
<dbReference type="SUPFAM" id="SSF50729">
    <property type="entry name" value="PH domain-like"/>
    <property type="match status" value="1"/>
</dbReference>
<dbReference type="SUPFAM" id="SSF53756">
    <property type="entry name" value="UDP-Glycosyltransferase/glycogen phosphorylase"/>
    <property type="match status" value="1"/>
</dbReference>
<dbReference type="PROSITE" id="PS50003">
    <property type="entry name" value="PH_DOMAIN"/>
    <property type="match status" value="1"/>
</dbReference>
<comment type="function">
    <text evidence="1 6">Sterol glycosyltransferase responsible for the glycosylation of ergosterol to form ergosterol-glucoside (By similarity). Mediates autophagic degradation of peroxisomes (pexophagy) (PubMed:17204848).</text>
</comment>
<comment type="catalytic activity">
    <reaction evidence="1">
        <text>a sterol + UDP-alpha-D-glucose = a sterol 3-beta-D-glucoside + UDP + H(+)</text>
        <dbReference type="Rhea" id="RHEA:22724"/>
        <dbReference type="ChEBI" id="CHEBI:15378"/>
        <dbReference type="ChEBI" id="CHEBI:15889"/>
        <dbReference type="ChEBI" id="CHEBI:37424"/>
        <dbReference type="ChEBI" id="CHEBI:58223"/>
        <dbReference type="ChEBI" id="CHEBI:58885"/>
        <dbReference type="EC" id="2.4.1.173"/>
    </reaction>
    <physiologicalReaction direction="left-to-right" evidence="1">
        <dbReference type="Rhea" id="RHEA:22725"/>
    </physiologicalReaction>
</comment>
<comment type="catalytic activity">
    <reaction evidence="1">
        <text>ergosterol + UDP-alpha-D-glucose = ergosteryl 3-beta-D-glucoside + UDP + H(+)</text>
        <dbReference type="Rhea" id="RHEA:61836"/>
        <dbReference type="ChEBI" id="CHEBI:15378"/>
        <dbReference type="ChEBI" id="CHEBI:16933"/>
        <dbReference type="ChEBI" id="CHEBI:52973"/>
        <dbReference type="ChEBI" id="CHEBI:58223"/>
        <dbReference type="ChEBI" id="CHEBI:58885"/>
    </reaction>
    <physiologicalReaction direction="left-to-right" evidence="1">
        <dbReference type="Rhea" id="RHEA:61837"/>
    </physiologicalReaction>
</comment>
<comment type="subcellular location">
    <subcellularLocation>
        <location evidence="1">Cytoplasm</location>
    </subcellularLocation>
    <subcellularLocation>
        <location evidence="2">Preautophagosomal structure membrane</location>
        <topology evidence="2">Peripheral membrane protein</topology>
    </subcellularLocation>
</comment>
<comment type="domain">
    <text evidence="2">The GRAM and PH domains are required for the localization of ATG26 to the preautophagosomal structure (PAS) and are involved in autophagy (By similarity).</text>
</comment>
<comment type="similarity">
    <text evidence="7">Belongs to the glycosyltransferase 28 family.</text>
</comment>
<accession>A7KAK6</accession>